<sequence length="212" mass="23635">MSLENQTQKERLCAVIRQLHTQGKSPATSTNYSFLDEDQVIFVSRSGVDKSQFQPEDFIAVDTMGLPLPPDEGIKPSAETLIHCFIYQNFPGITCVLHTHSVAATLLSGIFAAKQAVTFSGYEVIKGIAGQTTHETAIALPIFANDQDMKSFCQQLAQRQEELNNYGFLIAKHGLYAWGETMAIAKRHLEVWEFMLECELEQLKITPPLAAR</sequence>
<name>MTNB_PICP2</name>
<gene>
    <name evidence="1" type="primary">mtnB</name>
    <name type="ordered locus">SYNPCC7002_A0554</name>
</gene>
<accession>B1XPT3</accession>
<protein>
    <recommendedName>
        <fullName evidence="1">Methylthioribulose-1-phosphate dehydratase</fullName>
        <shortName evidence="1">MTRu-1-P dehydratase</shortName>
        <ecNumber evidence="1">4.2.1.109</ecNumber>
    </recommendedName>
</protein>
<organism>
    <name type="scientific">Picosynechococcus sp. (strain ATCC 27264 / PCC 7002 / PR-6)</name>
    <name type="common">Agmenellum quadruplicatum</name>
    <dbReference type="NCBI Taxonomy" id="32049"/>
    <lineage>
        <taxon>Bacteria</taxon>
        <taxon>Bacillati</taxon>
        <taxon>Cyanobacteriota</taxon>
        <taxon>Cyanophyceae</taxon>
        <taxon>Oscillatoriophycideae</taxon>
        <taxon>Chroococcales</taxon>
        <taxon>Geminocystaceae</taxon>
        <taxon>Picosynechococcus</taxon>
    </lineage>
</organism>
<feature type="chain" id="PRO_0000357109" description="Methylthioribulose-1-phosphate dehydratase">
    <location>
        <begin position="1"/>
        <end position="212"/>
    </location>
</feature>
<feature type="binding site" evidence="1">
    <location>
        <position position="98"/>
    </location>
    <ligand>
        <name>Zn(2+)</name>
        <dbReference type="ChEBI" id="CHEBI:29105"/>
    </ligand>
</feature>
<feature type="binding site" evidence="1">
    <location>
        <position position="100"/>
    </location>
    <ligand>
        <name>Zn(2+)</name>
        <dbReference type="ChEBI" id="CHEBI:29105"/>
    </ligand>
</feature>
<reference key="1">
    <citation type="submission" date="2008-02" db="EMBL/GenBank/DDBJ databases">
        <title>Complete sequence of Synechococcus sp. PCC 7002.</title>
        <authorList>
            <person name="Li T."/>
            <person name="Zhao J."/>
            <person name="Zhao C."/>
            <person name="Liu Z."/>
            <person name="Zhao F."/>
            <person name="Marquardt J."/>
            <person name="Nomura C.T."/>
            <person name="Persson S."/>
            <person name="Detter J.C."/>
            <person name="Richardson P.M."/>
            <person name="Lanz C."/>
            <person name="Schuster S.C."/>
            <person name="Wang J."/>
            <person name="Li S."/>
            <person name="Huang X."/>
            <person name="Cai T."/>
            <person name="Yu Z."/>
            <person name="Luo J."/>
            <person name="Zhao J."/>
            <person name="Bryant D.A."/>
        </authorList>
    </citation>
    <scope>NUCLEOTIDE SEQUENCE [LARGE SCALE GENOMIC DNA]</scope>
    <source>
        <strain>ATCC 27264 / PCC 7002 / PR-6</strain>
    </source>
</reference>
<keyword id="KW-0028">Amino-acid biosynthesis</keyword>
<keyword id="KW-0456">Lyase</keyword>
<keyword id="KW-0479">Metal-binding</keyword>
<keyword id="KW-0486">Methionine biosynthesis</keyword>
<keyword id="KW-1185">Reference proteome</keyword>
<keyword id="KW-0862">Zinc</keyword>
<comment type="function">
    <text evidence="1">Catalyzes the dehydration of methylthioribulose-1-phosphate (MTRu-1-P) into 2,3-diketo-5-methylthiopentyl-1-phosphate (DK-MTP-1-P).</text>
</comment>
<comment type="catalytic activity">
    <reaction evidence="1">
        <text>5-(methylsulfanyl)-D-ribulose 1-phosphate = 5-methylsulfanyl-2,3-dioxopentyl phosphate + H2O</text>
        <dbReference type="Rhea" id="RHEA:15549"/>
        <dbReference type="ChEBI" id="CHEBI:15377"/>
        <dbReference type="ChEBI" id="CHEBI:58548"/>
        <dbReference type="ChEBI" id="CHEBI:58828"/>
        <dbReference type="EC" id="4.2.1.109"/>
    </reaction>
</comment>
<comment type="cofactor">
    <cofactor evidence="1">
        <name>Zn(2+)</name>
        <dbReference type="ChEBI" id="CHEBI:29105"/>
    </cofactor>
    <text evidence="1">Binds 1 zinc ion per subunit.</text>
</comment>
<comment type="pathway">
    <text evidence="1">Amino-acid biosynthesis; L-methionine biosynthesis via salvage pathway; L-methionine from S-methyl-5-thio-alpha-D-ribose 1-phosphate: step 2/6.</text>
</comment>
<comment type="similarity">
    <text evidence="1">Belongs to the aldolase class II family. MtnB subfamily.</text>
</comment>
<proteinExistence type="inferred from homology"/>
<evidence type="ECO:0000255" key="1">
    <source>
        <dbReference type="HAMAP-Rule" id="MF_01677"/>
    </source>
</evidence>
<dbReference type="EC" id="4.2.1.109" evidence="1"/>
<dbReference type="EMBL" id="CP000951">
    <property type="protein sequence ID" value="ACA98561.1"/>
    <property type="molecule type" value="Genomic_DNA"/>
</dbReference>
<dbReference type="RefSeq" id="WP_012306185.1">
    <property type="nucleotide sequence ID" value="NZ_JAHHPU010000001.1"/>
</dbReference>
<dbReference type="SMR" id="B1XPT3"/>
<dbReference type="STRING" id="32049.SYNPCC7002_A0554"/>
<dbReference type="KEGG" id="syp:SYNPCC7002_A0554"/>
<dbReference type="eggNOG" id="COG0235">
    <property type="taxonomic scope" value="Bacteria"/>
</dbReference>
<dbReference type="HOGENOM" id="CLU_006033_4_1_3"/>
<dbReference type="UniPathway" id="UPA00904">
    <property type="reaction ID" value="UER00875"/>
</dbReference>
<dbReference type="Proteomes" id="UP000001688">
    <property type="component" value="Chromosome"/>
</dbReference>
<dbReference type="GO" id="GO:0005737">
    <property type="term" value="C:cytoplasm"/>
    <property type="evidence" value="ECO:0007669"/>
    <property type="project" value="InterPro"/>
</dbReference>
<dbReference type="GO" id="GO:0046570">
    <property type="term" value="F:methylthioribulose 1-phosphate dehydratase activity"/>
    <property type="evidence" value="ECO:0007669"/>
    <property type="project" value="UniProtKB-UniRule"/>
</dbReference>
<dbReference type="GO" id="GO:0008270">
    <property type="term" value="F:zinc ion binding"/>
    <property type="evidence" value="ECO:0007669"/>
    <property type="project" value="UniProtKB-UniRule"/>
</dbReference>
<dbReference type="GO" id="GO:0019509">
    <property type="term" value="P:L-methionine salvage from methylthioadenosine"/>
    <property type="evidence" value="ECO:0007669"/>
    <property type="project" value="UniProtKB-UniRule"/>
</dbReference>
<dbReference type="Gene3D" id="3.40.225.10">
    <property type="entry name" value="Class II aldolase/adducin N-terminal domain"/>
    <property type="match status" value="1"/>
</dbReference>
<dbReference type="HAMAP" id="MF_01677">
    <property type="entry name" value="Salvage_MtnB"/>
    <property type="match status" value="1"/>
</dbReference>
<dbReference type="InterPro" id="IPR001303">
    <property type="entry name" value="Aldolase_II/adducin_N"/>
</dbReference>
<dbReference type="InterPro" id="IPR036409">
    <property type="entry name" value="Aldolase_II/adducin_N_sf"/>
</dbReference>
<dbReference type="InterPro" id="IPR017714">
    <property type="entry name" value="MethylthioRu-1-P_deHdtase_MtnB"/>
</dbReference>
<dbReference type="NCBIfam" id="NF006672">
    <property type="entry name" value="PRK09220.1"/>
    <property type="match status" value="1"/>
</dbReference>
<dbReference type="NCBIfam" id="TIGR03328">
    <property type="entry name" value="salvage_mtnB"/>
    <property type="match status" value="1"/>
</dbReference>
<dbReference type="PANTHER" id="PTHR10640">
    <property type="entry name" value="METHYLTHIORIBULOSE-1-PHOSPHATE DEHYDRATASE"/>
    <property type="match status" value="1"/>
</dbReference>
<dbReference type="PANTHER" id="PTHR10640:SF7">
    <property type="entry name" value="METHYLTHIORIBULOSE-1-PHOSPHATE DEHYDRATASE"/>
    <property type="match status" value="1"/>
</dbReference>
<dbReference type="Pfam" id="PF00596">
    <property type="entry name" value="Aldolase_II"/>
    <property type="match status" value="1"/>
</dbReference>
<dbReference type="SMART" id="SM01007">
    <property type="entry name" value="Aldolase_II"/>
    <property type="match status" value="1"/>
</dbReference>
<dbReference type="SUPFAM" id="SSF53639">
    <property type="entry name" value="AraD/HMP-PK domain-like"/>
    <property type="match status" value="1"/>
</dbReference>